<reference key="1">
    <citation type="journal article" date="1986" name="Nature">
        <title>Chloroplast gene organization deduced from complete sequence of liverwort Marchantia polymorpha chloroplast DNA.</title>
        <authorList>
            <person name="Ohyama K."/>
            <person name="Fukuzawa H."/>
            <person name="Kohchi T."/>
            <person name="Shirai H."/>
            <person name="Sano T."/>
            <person name="Sano S."/>
            <person name="Umesono K."/>
            <person name="Shiki Y."/>
            <person name="Takeuchi M."/>
            <person name="Chang Z."/>
            <person name="Aota S."/>
            <person name="Inokuchi H."/>
            <person name="Ozeki H."/>
        </authorList>
    </citation>
    <scope>NUCLEOTIDE SEQUENCE [LARGE SCALE GENOMIC DNA]</scope>
</reference>
<reference key="2">
    <citation type="journal article" date="1988" name="J. Mol. Biol.">
        <title>Structure and organization of Marchantia polymorpha chloroplast genome. II. Gene organization of the large single copy region from rps'12 to atpB.</title>
        <authorList>
            <person name="Umesono K."/>
            <person name="Inokuchi H."/>
            <person name="Shiki Y."/>
            <person name="Takeuchi M."/>
            <person name="Chang Z."/>
            <person name="Fukuzawa H."/>
            <person name="Kohchi T."/>
            <person name="Shirai H."/>
            <person name="Ohyama K."/>
            <person name="Ozeki H."/>
        </authorList>
    </citation>
    <scope>NUCLEOTIDE SEQUENCE [GENOMIC DNA]</scope>
</reference>
<reference key="3">
    <citation type="journal article" date="1986" name="FEBS Lett.">
        <title>Coding sequences for chloroplast ribosomal protein S12 from the liverwort, Marchantia polymorpha, are separated far apart on the different DNA strands.</title>
        <authorList>
            <person name="Fukuzawa H."/>
            <person name="Kohchi T."/>
            <person name="Shirai H."/>
            <person name="Ohyama K."/>
            <person name="Umesono K."/>
            <person name="Inokuchi H."/>
            <person name="Ozeki H."/>
        </authorList>
    </citation>
    <scope>NUCLEOTIDE SEQUENCE [GENOMIC DNA] OF 1-39</scope>
</reference>
<evidence type="ECO:0000250" key="1"/>
<evidence type="ECO:0000305" key="2"/>
<keyword id="KW-0150">Chloroplast</keyword>
<keyword id="KW-0934">Plastid</keyword>
<keyword id="KW-0687">Ribonucleoprotein</keyword>
<keyword id="KW-0689">Ribosomal protein</keyword>
<keyword id="KW-0694">RNA-binding</keyword>
<keyword id="KW-0699">rRNA-binding</keyword>
<protein>
    <recommendedName>
        <fullName evidence="2">Small ribosomal subunit protein uS7c</fullName>
    </recommendedName>
    <alternativeName>
        <fullName>30S ribosomal protein S7, chloroplastic</fullName>
    </alternativeName>
</protein>
<proteinExistence type="inferred from homology"/>
<gene>
    <name type="primary">rps7</name>
</gene>
<dbReference type="EMBL" id="X04465">
    <property type="protein sequence ID" value="CAA28057.1"/>
    <property type="molecule type" value="Genomic_DNA"/>
</dbReference>
<dbReference type="EMBL" id="X03698">
    <property type="protein sequence ID" value="CAA27331.1"/>
    <property type="molecule type" value="Genomic_DNA"/>
</dbReference>
<dbReference type="PIR" id="A02712">
    <property type="entry name" value="R3LV7"/>
</dbReference>
<dbReference type="RefSeq" id="NP_039271.1">
    <property type="nucleotide sequence ID" value="NC_001319.1"/>
</dbReference>
<dbReference type="SMR" id="P06360"/>
<dbReference type="GeneID" id="2702531"/>
<dbReference type="GO" id="GO:0009507">
    <property type="term" value="C:chloroplast"/>
    <property type="evidence" value="ECO:0007669"/>
    <property type="project" value="UniProtKB-SubCell"/>
</dbReference>
<dbReference type="GO" id="GO:0015935">
    <property type="term" value="C:small ribosomal subunit"/>
    <property type="evidence" value="ECO:0007669"/>
    <property type="project" value="InterPro"/>
</dbReference>
<dbReference type="GO" id="GO:0019843">
    <property type="term" value="F:rRNA binding"/>
    <property type="evidence" value="ECO:0007669"/>
    <property type="project" value="UniProtKB-UniRule"/>
</dbReference>
<dbReference type="GO" id="GO:0003735">
    <property type="term" value="F:structural constituent of ribosome"/>
    <property type="evidence" value="ECO:0007669"/>
    <property type="project" value="InterPro"/>
</dbReference>
<dbReference type="GO" id="GO:0006412">
    <property type="term" value="P:translation"/>
    <property type="evidence" value="ECO:0007669"/>
    <property type="project" value="UniProtKB-UniRule"/>
</dbReference>
<dbReference type="CDD" id="cd14871">
    <property type="entry name" value="uS7_Chloroplast"/>
    <property type="match status" value="1"/>
</dbReference>
<dbReference type="FunFam" id="1.10.455.10:FF:000001">
    <property type="entry name" value="30S ribosomal protein S7"/>
    <property type="match status" value="1"/>
</dbReference>
<dbReference type="Gene3D" id="1.10.455.10">
    <property type="entry name" value="Ribosomal protein S7 domain"/>
    <property type="match status" value="1"/>
</dbReference>
<dbReference type="HAMAP" id="MF_00480_B">
    <property type="entry name" value="Ribosomal_uS7_B"/>
    <property type="match status" value="1"/>
</dbReference>
<dbReference type="InterPro" id="IPR000235">
    <property type="entry name" value="Ribosomal_uS7"/>
</dbReference>
<dbReference type="InterPro" id="IPR005717">
    <property type="entry name" value="Ribosomal_uS7_bac/org-type"/>
</dbReference>
<dbReference type="InterPro" id="IPR020606">
    <property type="entry name" value="Ribosomal_uS7_CS"/>
</dbReference>
<dbReference type="InterPro" id="IPR023798">
    <property type="entry name" value="Ribosomal_uS7_dom"/>
</dbReference>
<dbReference type="InterPro" id="IPR036823">
    <property type="entry name" value="Ribosomal_uS7_dom_sf"/>
</dbReference>
<dbReference type="NCBIfam" id="TIGR01029">
    <property type="entry name" value="rpsG_bact"/>
    <property type="match status" value="1"/>
</dbReference>
<dbReference type="PANTHER" id="PTHR11205">
    <property type="entry name" value="RIBOSOMAL PROTEIN S7"/>
    <property type="match status" value="1"/>
</dbReference>
<dbReference type="Pfam" id="PF00177">
    <property type="entry name" value="Ribosomal_S7"/>
    <property type="match status" value="1"/>
</dbReference>
<dbReference type="PIRSF" id="PIRSF002122">
    <property type="entry name" value="RPS7p_RPS7a_RPS5e_RPS7o"/>
    <property type="match status" value="1"/>
</dbReference>
<dbReference type="SUPFAM" id="SSF47973">
    <property type="entry name" value="Ribosomal protein S7"/>
    <property type="match status" value="1"/>
</dbReference>
<dbReference type="PROSITE" id="PS00052">
    <property type="entry name" value="RIBOSOMAL_S7"/>
    <property type="match status" value="1"/>
</dbReference>
<accession>P06360</accession>
<organism>
    <name type="scientific">Marchantia polymorpha</name>
    <name type="common">Common liverwort</name>
    <name type="synonym">Marchantia aquatica</name>
    <dbReference type="NCBI Taxonomy" id="3197"/>
    <lineage>
        <taxon>Eukaryota</taxon>
        <taxon>Viridiplantae</taxon>
        <taxon>Streptophyta</taxon>
        <taxon>Embryophyta</taxon>
        <taxon>Marchantiophyta</taxon>
        <taxon>Marchantiopsida</taxon>
        <taxon>Marchantiidae</taxon>
        <taxon>Marchantiales</taxon>
        <taxon>Marchantiaceae</taxon>
        <taxon>Marchantia</taxon>
    </lineage>
</organism>
<geneLocation type="chloroplast"/>
<name>RR7_MARPO</name>
<comment type="function">
    <text evidence="1">One of the primary rRNA binding proteins, it binds directly to 16S rRNA where it nucleates assembly of the head domain of the 30S subunit.</text>
</comment>
<comment type="subunit">
    <text>Part of the 30S ribosomal subunit.</text>
</comment>
<comment type="subcellular location">
    <subcellularLocation>
        <location>Plastid</location>
        <location>Chloroplast</location>
    </subcellularLocation>
</comment>
<comment type="similarity">
    <text evidence="2">Belongs to the universal ribosomal protein uS7 family.</text>
</comment>
<sequence>MSRKSIAEKQVAKPDPIYRNRLVNMLVNRILKNGKKSLAYRILYKAMKNIKQKTKKNPLFVLRQAVRKVTPNVTVKARRIDGSTYQVPLEIKSTQGKALAIRWLLGASRKRSGQNMAFKLSYELIDAARDNGIAIRKKEETHKMAEANRAFAHFR</sequence>
<feature type="chain" id="PRO_0000124473" description="Small ribosomal subunit protein uS7c">
    <location>
        <begin position="1"/>
        <end position="155"/>
    </location>
</feature>